<keyword id="KW-0072">Autophagy</keyword>
<keyword id="KW-0963">Cytoplasm</keyword>
<keyword id="KW-1017">Isopeptide bond</keyword>
<keyword id="KW-0653">Protein transport</keyword>
<keyword id="KW-1185">Reference proteome</keyword>
<keyword id="KW-0813">Transport</keyword>
<keyword id="KW-0833">Ubl conjugation pathway</keyword>
<comment type="function">
    <text evidence="1 3">Ubiquitin-like protein involved in autophagy vesicles formation. Required for atg8 association to the vesicle membranes. Conjugated to atg5 through a ubiquitin-like conjugating system involving also atg7 as an E1-like activating enzyme is essential for its function (By similarity).</text>
</comment>
<comment type="subcellular location">
    <subcellularLocation>
        <location evidence="1">Cytoplasm</location>
    </subcellularLocation>
</comment>
<comment type="similarity">
    <text evidence="4">Belongs to the ATG12 family.</text>
</comment>
<evidence type="ECO:0000250" key="1"/>
<evidence type="ECO:0000256" key="2">
    <source>
        <dbReference type="SAM" id="MobiDB-lite"/>
    </source>
</evidence>
<evidence type="ECO:0000269" key="3">
    <source>
    </source>
</evidence>
<evidence type="ECO:0000305" key="4"/>
<dbReference type="EMBL" id="AY191017">
    <property type="protein sequence ID" value="AAO39080.1"/>
    <property type="molecule type" value="Genomic_DNA"/>
</dbReference>
<dbReference type="EMBL" id="AAFI02000049">
    <property type="protein sequence ID" value="EAL65908.1"/>
    <property type="molecule type" value="Genomic_DNA"/>
</dbReference>
<dbReference type="RefSeq" id="XP_639316.1">
    <property type="nucleotide sequence ID" value="XM_634224.1"/>
</dbReference>
<dbReference type="SMR" id="Q86CR6"/>
<dbReference type="FunCoup" id="Q86CR6">
    <property type="interactions" value="216"/>
</dbReference>
<dbReference type="STRING" id="44689.Q86CR6"/>
<dbReference type="PaxDb" id="44689-DDB0191412"/>
<dbReference type="EnsemblProtists" id="EAL65908">
    <property type="protein sequence ID" value="EAL65908"/>
    <property type="gene ID" value="DDB_G0282929"/>
</dbReference>
<dbReference type="GeneID" id="8623887"/>
<dbReference type="KEGG" id="ddi:DDB_G0282929"/>
<dbReference type="dictyBase" id="DDB_G0282929">
    <property type="gene designation" value="atg12"/>
</dbReference>
<dbReference type="VEuPathDB" id="AmoebaDB:DDB_G0282929"/>
<dbReference type="eggNOG" id="KOG3439">
    <property type="taxonomic scope" value="Eukaryota"/>
</dbReference>
<dbReference type="HOGENOM" id="CLU_106795_0_1_1"/>
<dbReference type="InParanoid" id="Q86CR6"/>
<dbReference type="OMA" id="YAKTHAW"/>
<dbReference type="PhylomeDB" id="Q86CR6"/>
<dbReference type="Reactome" id="R-DDI-1632852">
    <property type="pathway name" value="Macroautophagy"/>
</dbReference>
<dbReference type="Reactome" id="R-DDI-5205685">
    <property type="pathway name" value="PINK1-PRKN Mediated Mitophagy"/>
</dbReference>
<dbReference type="Reactome" id="R-DDI-8934903">
    <property type="pathway name" value="Receptor Mediated Mitophagy"/>
</dbReference>
<dbReference type="PRO" id="PR:Q86CR6"/>
<dbReference type="Proteomes" id="UP000002195">
    <property type="component" value="Chromosome 4"/>
</dbReference>
<dbReference type="GO" id="GO:0034274">
    <property type="term" value="C:Atg12-Atg5-Atg16 complex"/>
    <property type="evidence" value="ECO:0000314"/>
    <property type="project" value="dictyBase"/>
</dbReference>
<dbReference type="GO" id="GO:0000421">
    <property type="term" value="C:autophagosome membrane"/>
    <property type="evidence" value="ECO:0000318"/>
    <property type="project" value="GO_Central"/>
</dbReference>
<dbReference type="GO" id="GO:0034045">
    <property type="term" value="C:phagophore assembly site membrane"/>
    <property type="evidence" value="ECO:0000318"/>
    <property type="project" value="GO_Central"/>
</dbReference>
<dbReference type="GO" id="GO:0031386">
    <property type="term" value="F:protein tag activity"/>
    <property type="evidence" value="ECO:0000318"/>
    <property type="project" value="GO_Central"/>
</dbReference>
<dbReference type="GO" id="GO:0000045">
    <property type="term" value="P:autophagosome assembly"/>
    <property type="evidence" value="ECO:0000318"/>
    <property type="project" value="GO_Central"/>
</dbReference>
<dbReference type="GO" id="GO:0097352">
    <property type="term" value="P:autophagosome maturation"/>
    <property type="evidence" value="ECO:0000315"/>
    <property type="project" value="dictyBase"/>
</dbReference>
<dbReference type="GO" id="GO:0000422">
    <property type="term" value="P:autophagy of mitochondrion"/>
    <property type="evidence" value="ECO:0000318"/>
    <property type="project" value="GO_Central"/>
</dbReference>
<dbReference type="GO" id="GO:0061723">
    <property type="term" value="P:glycophagy"/>
    <property type="evidence" value="ECO:0000318"/>
    <property type="project" value="GO_Central"/>
</dbReference>
<dbReference type="GO" id="GO:0006909">
    <property type="term" value="P:phagocytosis"/>
    <property type="evidence" value="ECO:0000315"/>
    <property type="project" value="dictyBase"/>
</dbReference>
<dbReference type="GO" id="GO:0034727">
    <property type="term" value="P:piecemeal microautophagy of the nucleus"/>
    <property type="evidence" value="ECO:0000318"/>
    <property type="project" value="GO_Central"/>
</dbReference>
<dbReference type="GO" id="GO:0006907">
    <property type="term" value="P:pinocytosis"/>
    <property type="evidence" value="ECO:0000315"/>
    <property type="project" value="dictyBase"/>
</dbReference>
<dbReference type="GO" id="GO:0043161">
    <property type="term" value="P:proteasome-mediated ubiquitin-dependent protein catabolic process"/>
    <property type="evidence" value="ECO:0000315"/>
    <property type="project" value="dictyBase"/>
</dbReference>
<dbReference type="GO" id="GO:0015031">
    <property type="term" value="P:protein transport"/>
    <property type="evidence" value="ECO:0007669"/>
    <property type="project" value="UniProtKB-KW"/>
</dbReference>
<dbReference type="GO" id="GO:0009617">
    <property type="term" value="P:response to bacterium"/>
    <property type="evidence" value="ECO:0007007"/>
    <property type="project" value="dictyBase"/>
</dbReference>
<dbReference type="GO" id="GO:0030587">
    <property type="term" value="P:sorocarp development"/>
    <property type="evidence" value="ECO:0000315"/>
    <property type="project" value="dictyBase"/>
</dbReference>
<dbReference type="CDD" id="cd01612">
    <property type="entry name" value="Ubl_ATG12"/>
    <property type="match status" value="1"/>
</dbReference>
<dbReference type="FunFam" id="3.10.20.90:FF:000150">
    <property type="entry name" value="Ubiquitin-like protein ATG12"/>
    <property type="match status" value="1"/>
</dbReference>
<dbReference type="Gene3D" id="3.10.20.90">
    <property type="entry name" value="Phosphatidylinositol 3-kinase Catalytic Subunit, Chain A, domain 1"/>
    <property type="match status" value="1"/>
</dbReference>
<dbReference type="InterPro" id="IPR007242">
    <property type="entry name" value="Atg12"/>
</dbReference>
<dbReference type="InterPro" id="IPR029071">
    <property type="entry name" value="Ubiquitin-like_domsf"/>
</dbReference>
<dbReference type="PANTHER" id="PTHR13385">
    <property type="entry name" value="AUTOPHAGY PROTEIN 12"/>
    <property type="match status" value="1"/>
</dbReference>
<dbReference type="PANTHER" id="PTHR13385:SF0">
    <property type="entry name" value="UBIQUITIN-LIKE PROTEIN ATG12"/>
    <property type="match status" value="1"/>
</dbReference>
<dbReference type="Pfam" id="PF04110">
    <property type="entry name" value="APG12"/>
    <property type="match status" value="1"/>
</dbReference>
<dbReference type="SUPFAM" id="SSF54236">
    <property type="entry name" value="Ubiquitin-like"/>
    <property type="match status" value="1"/>
</dbReference>
<organism>
    <name type="scientific">Dictyostelium discoideum</name>
    <name type="common">Social amoeba</name>
    <dbReference type="NCBI Taxonomy" id="44689"/>
    <lineage>
        <taxon>Eukaryota</taxon>
        <taxon>Amoebozoa</taxon>
        <taxon>Evosea</taxon>
        <taxon>Eumycetozoa</taxon>
        <taxon>Dictyostelia</taxon>
        <taxon>Dictyosteliales</taxon>
        <taxon>Dictyosteliaceae</taxon>
        <taxon>Dictyostelium</taxon>
    </lineage>
</organism>
<gene>
    <name type="primary">atg12</name>
    <name type="synonym">apg12</name>
    <name type="ORF">DDB_G0282929</name>
</gene>
<proteinExistence type="inferred from homology"/>
<name>ATG12_DICDI</name>
<reference key="1">
    <citation type="journal article" date="2003" name="J. Biol. Chem.">
        <title>Macroautophagy is required for multicellular development of the social amoeba Dictyostelium discoideum.</title>
        <authorList>
            <person name="Otto G.P."/>
            <person name="Wu M.Y."/>
            <person name="Kazgan N."/>
            <person name="Anderson O.R."/>
            <person name="Kessin R.H."/>
        </authorList>
    </citation>
    <scope>NUCLEOTIDE SEQUENCE [GENOMIC DNA]</scope>
    <scope>SUBCELLULAR LOCATION</scope>
    <scope>FUNCTION</scope>
    <source>
        <strain>AX3 / DH1</strain>
    </source>
</reference>
<reference key="2">
    <citation type="journal article" date="2005" name="Nature">
        <title>The genome of the social amoeba Dictyostelium discoideum.</title>
        <authorList>
            <person name="Eichinger L."/>
            <person name="Pachebat J.A."/>
            <person name="Gloeckner G."/>
            <person name="Rajandream M.A."/>
            <person name="Sucgang R."/>
            <person name="Berriman M."/>
            <person name="Song J."/>
            <person name="Olsen R."/>
            <person name="Szafranski K."/>
            <person name="Xu Q."/>
            <person name="Tunggal B."/>
            <person name="Kummerfeld S."/>
            <person name="Madera M."/>
            <person name="Konfortov B.A."/>
            <person name="Rivero F."/>
            <person name="Bankier A.T."/>
            <person name="Lehmann R."/>
            <person name="Hamlin N."/>
            <person name="Davies R."/>
            <person name="Gaudet P."/>
            <person name="Fey P."/>
            <person name="Pilcher K."/>
            <person name="Chen G."/>
            <person name="Saunders D."/>
            <person name="Sodergren E.J."/>
            <person name="Davis P."/>
            <person name="Kerhornou A."/>
            <person name="Nie X."/>
            <person name="Hall N."/>
            <person name="Anjard C."/>
            <person name="Hemphill L."/>
            <person name="Bason N."/>
            <person name="Farbrother P."/>
            <person name="Desany B."/>
            <person name="Just E."/>
            <person name="Morio T."/>
            <person name="Rost R."/>
            <person name="Churcher C.M."/>
            <person name="Cooper J."/>
            <person name="Haydock S."/>
            <person name="van Driessche N."/>
            <person name="Cronin A."/>
            <person name="Goodhead I."/>
            <person name="Muzny D.M."/>
            <person name="Mourier T."/>
            <person name="Pain A."/>
            <person name="Lu M."/>
            <person name="Harper D."/>
            <person name="Lindsay R."/>
            <person name="Hauser H."/>
            <person name="James K.D."/>
            <person name="Quiles M."/>
            <person name="Madan Babu M."/>
            <person name="Saito T."/>
            <person name="Buchrieser C."/>
            <person name="Wardroper A."/>
            <person name="Felder M."/>
            <person name="Thangavelu M."/>
            <person name="Johnson D."/>
            <person name="Knights A."/>
            <person name="Loulseged H."/>
            <person name="Mungall K.L."/>
            <person name="Oliver K."/>
            <person name="Price C."/>
            <person name="Quail M.A."/>
            <person name="Urushihara H."/>
            <person name="Hernandez J."/>
            <person name="Rabbinowitsch E."/>
            <person name="Steffen D."/>
            <person name="Sanders M."/>
            <person name="Ma J."/>
            <person name="Kohara Y."/>
            <person name="Sharp S."/>
            <person name="Simmonds M.N."/>
            <person name="Spiegler S."/>
            <person name="Tivey A."/>
            <person name="Sugano S."/>
            <person name="White B."/>
            <person name="Walker D."/>
            <person name="Woodward J.R."/>
            <person name="Winckler T."/>
            <person name="Tanaka Y."/>
            <person name="Shaulsky G."/>
            <person name="Schleicher M."/>
            <person name="Weinstock G.M."/>
            <person name="Rosenthal A."/>
            <person name="Cox E.C."/>
            <person name="Chisholm R.L."/>
            <person name="Gibbs R.A."/>
            <person name="Loomis W.F."/>
            <person name="Platzer M."/>
            <person name="Kay R.R."/>
            <person name="Williams J.G."/>
            <person name="Dear P.H."/>
            <person name="Noegel A.A."/>
            <person name="Barrell B.G."/>
            <person name="Kuspa A."/>
        </authorList>
    </citation>
    <scope>NUCLEOTIDE SEQUENCE [LARGE SCALE GENOMIC DNA]</scope>
    <source>
        <strain>AX4</strain>
    </source>
</reference>
<sequence length="124" mass="14194">MEEEEKNNNEVASPTEQNTESTTEQQPQLPVKITSESKIIVYFKNAGGAQPLKQKKFKIQANVSFQNVIDKLRGQLKLKSNESLFLFINQVFQPSPDEILGELYKCFSHNDQLIINYSLQMAWG</sequence>
<feature type="chain" id="PRO_0000327635" description="Ubiquitin-like protein atg12">
    <location>
        <begin position="1"/>
        <end position="124"/>
    </location>
</feature>
<feature type="region of interest" description="Disordered" evidence="2">
    <location>
        <begin position="1"/>
        <end position="31"/>
    </location>
</feature>
<feature type="compositionally biased region" description="Low complexity" evidence="2">
    <location>
        <begin position="13"/>
        <end position="28"/>
    </location>
</feature>
<feature type="cross-link" description="Glycyl lysine isopeptide (Gly-Lys) (interchain with K-187 in atg5)" evidence="1">
    <location>
        <position position="124"/>
    </location>
</feature>
<accession>Q86CR6</accession>
<accession>Q54RN5</accession>
<protein>
    <recommendedName>
        <fullName>Ubiquitin-like protein atg12</fullName>
    </recommendedName>
    <alternativeName>
        <fullName>Autophagy-related protein 12</fullName>
        <shortName>APG12-like</shortName>
    </alternativeName>
</protein>